<gene>
    <name evidence="1" type="primary">leuA</name>
    <name type="ordered locus">Achl_1963</name>
</gene>
<name>LEU1_PSECP</name>
<sequence>MRNAQKSSGMPFHRYTPFQDQITVEMPDRTWPDKVITKAPRWCAVDLRDGNQALIDPMSPARKMKMFDLLVRMGYKEIEVGFPSASQTDFDFVRQLIEGNHIPDDVTIQVLTQAREHLIERTYESLVGAKQAIVHLYNSTSVLQRRVVFNQDEDGILDIALQGARLCRKYEETLADTHITYEYSPESFTGTELEYAVRVCNAVADVFEASADRQVIINLPATVEMATPNVYADSIEWMSRHLHPREGIILSLHPHNDRGTGVAAAELGYMAGADRIEGCLFGNGERTGNVDLVTLGLNLFVQGIDPMIDFSDIDDVRRTVEYCNQLPVPERSPYGGDLVFTAFSGSHQDAIKKGFEALERDAAAAGKDVADVTWQVPYLPVDPKDLGRSYEAVIRVNSQSGKGGVAYLLKNEHSLDLPRRAQIEFSGVIQRRTDTVGGEVSGAQLWQIFQDEYLPSGKADGQWGRYSLGSVKTETDDDGGMTLHASLTVDGAQVSRTGTGNGPIAALLNILTQDGVDVRVLDYSEHALSEGGNAMAAAYVECAVGERVLWGVGIDANTSMSSLKAVISAVNRAIRDAQS</sequence>
<evidence type="ECO:0000255" key="1">
    <source>
        <dbReference type="HAMAP-Rule" id="MF_00572"/>
    </source>
</evidence>
<keyword id="KW-0028">Amino-acid biosynthesis</keyword>
<keyword id="KW-0100">Branched-chain amino acid biosynthesis</keyword>
<keyword id="KW-0963">Cytoplasm</keyword>
<keyword id="KW-0432">Leucine biosynthesis</keyword>
<keyword id="KW-0460">Magnesium</keyword>
<keyword id="KW-0479">Metal-binding</keyword>
<keyword id="KW-0808">Transferase</keyword>
<proteinExistence type="inferred from homology"/>
<organism>
    <name type="scientific">Pseudarthrobacter chlorophenolicus (strain ATCC 700700 / DSM 12829 / CIP 107037 / JCM 12360 / KCTC 9906 / NCIMB 13794 / A6)</name>
    <name type="common">Arthrobacter chlorophenolicus</name>
    <dbReference type="NCBI Taxonomy" id="452863"/>
    <lineage>
        <taxon>Bacteria</taxon>
        <taxon>Bacillati</taxon>
        <taxon>Actinomycetota</taxon>
        <taxon>Actinomycetes</taxon>
        <taxon>Micrococcales</taxon>
        <taxon>Micrococcaceae</taxon>
        <taxon>Pseudarthrobacter</taxon>
    </lineage>
</organism>
<protein>
    <recommendedName>
        <fullName evidence="1">2-isopropylmalate synthase</fullName>
        <ecNumber evidence="1">2.3.3.13</ecNumber>
    </recommendedName>
    <alternativeName>
        <fullName evidence="1">Alpha-IPM synthase</fullName>
    </alternativeName>
    <alternativeName>
        <fullName evidence="1">Alpha-isopropylmalate synthase</fullName>
    </alternativeName>
</protein>
<accession>B8H8Q9</accession>
<feature type="chain" id="PRO_1000146850" description="2-isopropylmalate synthase">
    <location>
        <begin position="1"/>
        <end position="579"/>
    </location>
</feature>
<feature type="domain" description="Pyruvate carboxyltransferase" evidence="1">
    <location>
        <begin position="40"/>
        <end position="314"/>
    </location>
</feature>
<feature type="region of interest" description="Regulatory domain" evidence="1">
    <location>
        <begin position="456"/>
        <end position="579"/>
    </location>
</feature>
<feature type="binding site" evidence="1">
    <location>
        <position position="49"/>
    </location>
    <ligand>
        <name>Mg(2+)</name>
        <dbReference type="ChEBI" id="CHEBI:18420"/>
    </ligand>
</feature>
<feature type="binding site" evidence="1">
    <location>
        <position position="253"/>
    </location>
    <ligand>
        <name>Mg(2+)</name>
        <dbReference type="ChEBI" id="CHEBI:18420"/>
    </ligand>
</feature>
<feature type="binding site" evidence="1">
    <location>
        <position position="255"/>
    </location>
    <ligand>
        <name>Mg(2+)</name>
        <dbReference type="ChEBI" id="CHEBI:18420"/>
    </ligand>
</feature>
<feature type="binding site" evidence="1">
    <location>
        <position position="289"/>
    </location>
    <ligand>
        <name>Mg(2+)</name>
        <dbReference type="ChEBI" id="CHEBI:18420"/>
    </ligand>
</feature>
<comment type="function">
    <text evidence="1">Catalyzes the condensation of the acetyl group of acetyl-CoA with 3-methyl-2-oxobutanoate (2-ketoisovalerate) to form 3-carboxy-3-hydroxy-4-methylpentanoate (2-isopropylmalate).</text>
</comment>
<comment type="catalytic activity">
    <reaction evidence="1">
        <text>3-methyl-2-oxobutanoate + acetyl-CoA + H2O = (2S)-2-isopropylmalate + CoA + H(+)</text>
        <dbReference type="Rhea" id="RHEA:21524"/>
        <dbReference type="ChEBI" id="CHEBI:1178"/>
        <dbReference type="ChEBI" id="CHEBI:11851"/>
        <dbReference type="ChEBI" id="CHEBI:15377"/>
        <dbReference type="ChEBI" id="CHEBI:15378"/>
        <dbReference type="ChEBI" id="CHEBI:57287"/>
        <dbReference type="ChEBI" id="CHEBI:57288"/>
        <dbReference type="EC" id="2.3.3.13"/>
    </reaction>
</comment>
<comment type="cofactor">
    <cofactor evidence="1">
        <name>Mg(2+)</name>
        <dbReference type="ChEBI" id="CHEBI:18420"/>
    </cofactor>
</comment>
<comment type="pathway">
    <text evidence="1">Amino-acid biosynthesis; L-leucine biosynthesis; L-leucine from 3-methyl-2-oxobutanoate: step 1/4.</text>
</comment>
<comment type="subunit">
    <text evidence="1">Homodimer.</text>
</comment>
<comment type="subcellular location">
    <subcellularLocation>
        <location evidence="1">Cytoplasm</location>
    </subcellularLocation>
</comment>
<comment type="similarity">
    <text evidence="1">Belongs to the alpha-IPM synthase/homocitrate synthase family. LeuA type 2 subfamily.</text>
</comment>
<reference key="1">
    <citation type="submission" date="2009-01" db="EMBL/GenBank/DDBJ databases">
        <title>Complete sequence of chromosome of Arthrobacter chlorophenolicus A6.</title>
        <authorList>
            <consortium name="US DOE Joint Genome Institute"/>
            <person name="Lucas S."/>
            <person name="Copeland A."/>
            <person name="Lapidus A."/>
            <person name="Glavina del Rio T."/>
            <person name="Tice H."/>
            <person name="Bruce D."/>
            <person name="Goodwin L."/>
            <person name="Pitluck S."/>
            <person name="Goltsman E."/>
            <person name="Clum A."/>
            <person name="Larimer F."/>
            <person name="Land M."/>
            <person name="Hauser L."/>
            <person name="Kyrpides N."/>
            <person name="Mikhailova N."/>
            <person name="Jansson J."/>
            <person name="Richardson P."/>
        </authorList>
    </citation>
    <scope>NUCLEOTIDE SEQUENCE [LARGE SCALE GENOMIC DNA]</scope>
    <source>
        <strain>ATCC 700700 / DSM 12829 / CIP 107037 / JCM 12360 / KCTC 9906 / NCIMB 13794 / A6</strain>
    </source>
</reference>
<dbReference type="EC" id="2.3.3.13" evidence="1"/>
<dbReference type="EMBL" id="CP001341">
    <property type="protein sequence ID" value="ACL39937.1"/>
    <property type="molecule type" value="Genomic_DNA"/>
</dbReference>
<dbReference type="RefSeq" id="WP_015937156.1">
    <property type="nucleotide sequence ID" value="NC_011886.1"/>
</dbReference>
<dbReference type="SMR" id="B8H8Q9"/>
<dbReference type="STRING" id="452863.Achl_1963"/>
<dbReference type="KEGG" id="ach:Achl_1963"/>
<dbReference type="eggNOG" id="COG0119">
    <property type="taxonomic scope" value="Bacteria"/>
</dbReference>
<dbReference type="HOGENOM" id="CLU_004588_3_0_11"/>
<dbReference type="OrthoDB" id="9803573at2"/>
<dbReference type="UniPathway" id="UPA00048">
    <property type="reaction ID" value="UER00070"/>
</dbReference>
<dbReference type="Proteomes" id="UP000002505">
    <property type="component" value="Chromosome"/>
</dbReference>
<dbReference type="GO" id="GO:0005737">
    <property type="term" value="C:cytoplasm"/>
    <property type="evidence" value="ECO:0007669"/>
    <property type="project" value="UniProtKB-SubCell"/>
</dbReference>
<dbReference type="GO" id="GO:0003852">
    <property type="term" value="F:2-isopropylmalate synthase activity"/>
    <property type="evidence" value="ECO:0007669"/>
    <property type="project" value="UniProtKB-UniRule"/>
</dbReference>
<dbReference type="GO" id="GO:0003985">
    <property type="term" value="F:acetyl-CoA C-acetyltransferase activity"/>
    <property type="evidence" value="ECO:0007669"/>
    <property type="project" value="UniProtKB-UniRule"/>
</dbReference>
<dbReference type="GO" id="GO:0000287">
    <property type="term" value="F:magnesium ion binding"/>
    <property type="evidence" value="ECO:0007669"/>
    <property type="project" value="UniProtKB-UniRule"/>
</dbReference>
<dbReference type="GO" id="GO:0009098">
    <property type="term" value="P:L-leucine biosynthetic process"/>
    <property type="evidence" value="ECO:0007669"/>
    <property type="project" value="UniProtKB-UniRule"/>
</dbReference>
<dbReference type="CDD" id="cd07942">
    <property type="entry name" value="DRE_TIM_LeuA"/>
    <property type="match status" value="1"/>
</dbReference>
<dbReference type="FunFam" id="3.20.20.70:FF:000045">
    <property type="entry name" value="2-isopropylmalate synthase"/>
    <property type="match status" value="1"/>
</dbReference>
<dbReference type="FunFam" id="3.30.160.270:FF:000006">
    <property type="entry name" value="2-isopropylmalate synthase"/>
    <property type="match status" value="1"/>
</dbReference>
<dbReference type="Gene3D" id="3.30.160.270">
    <property type="match status" value="1"/>
</dbReference>
<dbReference type="Gene3D" id="3.20.20.70">
    <property type="entry name" value="Aldolase class I"/>
    <property type="match status" value="1"/>
</dbReference>
<dbReference type="HAMAP" id="MF_00572">
    <property type="entry name" value="LeuA_type2"/>
    <property type="match status" value="1"/>
</dbReference>
<dbReference type="InterPro" id="IPR013709">
    <property type="entry name" value="2-isopropylmalate_synth_dimer"/>
</dbReference>
<dbReference type="InterPro" id="IPR002034">
    <property type="entry name" value="AIPM/Hcit_synth_CS"/>
</dbReference>
<dbReference type="InterPro" id="IPR013785">
    <property type="entry name" value="Aldolase_TIM"/>
</dbReference>
<dbReference type="InterPro" id="IPR005668">
    <property type="entry name" value="IPM_Synthase"/>
</dbReference>
<dbReference type="InterPro" id="IPR054692">
    <property type="entry name" value="LeuA-like_post-cat"/>
</dbReference>
<dbReference type="InterPro" id="IPR036230">
    <property type="entry name" value="LeuA_allosteric_dom_sf"/>
</dbReference>
<dbReference type="InterPro" id="IPR039371">
    <property type="entry name" value="LeuA_N_DRE-TIM"/>
</dbReference>
<dbReference type="InterPro" id="IPR000891">
    <property type="entry name" value="PYR_CT"/>
</dbReference>
<dbReference type="NCBIfam" id="TIGR00970">
    <property type="entry name" value="leuA_yeast"/>
    <property type="match status" value="1"/>
</dbReference>
<dbReference type="NCBIfam" id="NF002991">
    <property type="entry name" value="PRK03739.1"/>
    <property type="match status" value="1"/>
</dbReference>
<dbReference type="PANTHER" id="PTHR46911">
    <property type="match status" value="1"/>
</dbReference>
<dbReference type="PANTHER" id="PTHR46911:SF1">
    <property type="entry name" value="2-ISOPROPYLMALATE SYNTHASE"/>
    <property type="match status" value="1"/>
</dbReference>
<dbReference type="Pfam" id="PF00682">
    <property type="entry name" value="HMGL-like"/>
    <property type="match status" value="1"/>
</dbReference>
<dbReference type="Pfam" id="PF22615">
    <property type="entry name" value="IPMS_D2"/>
    <property type="match status" value="1"/>
</dbReference>
<dbReference type="Pfam" id="PF08502">
    <property type="entry name" value="LeuA_dimer"/>
    <property type="match status" value="1"/>
</dbReference>
<dbReference type="SMART" id="SM00917">
    <property type="entry name" value="LeuA_dimer"/>
    <property type="match status" value="1"/>
</dbReference>
<dbReference type="SUPFAM" id="SSF110921">
    <property type="entry name" value="2-isopropylmalate synthase LeuA, allosteric (dimerisation) domain"/>
    <property type="match status" value="1"/>
</dbReference>
<dbReference type="SUPFAM" id="SSF51569">
    <property type="entry name" value="Aldolase"/>
    <property type="match status" value="1"/>
</dbReference>
<dbReference type="SUPFAM" id="SSF89000">
    <property type="entry name" value="post-HMGL domain-like"/>
    <property type="match status" value="1"/>
</dbReference>
<dbReference type="PROSITE" id="PS00815">
    <property type="entry name" value="AIPM_HOMOCIT_SYNTH_1"/>
    <property type="match status" value="1"/>
</dbReference>
<dbReference type="PROSITE" id="PS00816">
    <property type="entry name" value="AIPM_HOMOCIT_SYNTH_2"/>
    <property type="match status" value="1"/>
</dbReference>
<dbReference type="PROSITE" id="PS50991">
    <property type="entry name" value="PYR_CT"/>
    <property type="match status" value="1"/>
</dbReference>